<dbReference type="EC" id="1.1.1.1" evidence="1"/>
<dbReference type="EC" id="1.1.1.-"/>
<dbReference type="EC" id="1.1.1.284" evidence="1"/>
<dbReference type="PIR" id="A33419">
    <property type="entry name" value="A33419"/>
</dbReference>
<dbReference type="PIR" id="S02617">
    <property type="entry name" value="S02617"/>
</dbReference>
<dbReference type="SMR" id="P19854"/>
<dbReference type="FunCoup" id="P19854">
    <property type="interactions" value="1948"/>
</dbReference>
<dbReference type="STRING" id="9796.ENSECAP00000027421"/>
<dbReference type="iPTMnet" id="P19854"/>
<dbReference type="PaxDb" id="9796-ENSECAP00000027421"/>
<dbReference type="PeptideAtlas" id="P19854"/>
<dbReference type="InParanoid" id="P19854"/>
<dbReference type="Proteomes" id="UP000002281">
    <property type="component" value="Unplaced"/>
</dbReference>
<dbReference type="GO" id="GO:0005829">
    <property type="term" value="C:cytosol"/>
    <property type="evidence" value="ECO:0000318"/>
    <property type="project" value="GO_Central"/>
</dbReference>
<dbReference type="GO" id="GO:0004022">
    <property type="term" value="F:alcohol dehydrogenase (NAD+) activity"/>
    <property type="evidence" value="ECO:0000318"/>
    <property type="project" value="GO_Central"/>
</dbReference>
<dbReference type="GO" id="GO:0106322">
    <property type="term" value="F:S-(hydroxymethyl)glutathione dehydrogenase (NAD+) activity"/>
    <property type="evidence" value="ECO:0007669"/>
    <property type="project" value="RHEA"/>
</dbReference>
<dbReference type="GO" id="GO:0106321">
    <property type="term" value="F:S-(hydroxymethyl)glutathione dehydrogenase (NADP+) activity"/>
    <property type="evidence" value="ECO:0007669"/>
    <property type="project" value="RHEA"/>
</dbReference>
<dbReference type="GO" id="GO:0051903">
    <property type="term" value="F:S-(hydroxymethyl)glutathione dehydrogenase [NAD(P)+] activity"/>
    <property type="evidence" value="ECO:0000318"/>
    <property type="project" value="GO_Central"/>
</dbReference>
<dbReference type="GO" id="GO:0080007">
    <property type="term" value="F:S-nitrosoglutathione reductase (NADH) activity"/>
    <property type="evidence" value="ECO:0007669"/>
    <property type="project" value="RHEA"/>
</dbReference>
<dbReference type="GO" id="GO:0008270">
    <property type="term" value="F:zinc ion binding"/>
    <property type="evidence" value="ECO:0000318"/>
    <property type="project" value="GO_Central"/>
</dbReference>
<dbReference type="GO" id="GO:0010430">
    <property type="term" value="P:fatty acid omega-oxidation"/>
    <property type="evidence" value="ECO:0000250"/>
    <property type="project" value="UniProtKB"/>
</dbReference>
<dbReference type="GO" id="GO:0046294">
    <property type="term" value="P:formaldehyde catabolic process"/>
    <property type="evidence" value="ECO:0000318"/>
    <property type="project" value="GO_Central"/>
</dbReference>
<dbReference type="CDD" id="cd08300">
    <property type="entry name" value="alcohol_DH_class_III"/>
    <property type="match status" value="1"/>
</dbReference>
<dbReference type="FunFam" id="3.40.50.720:FF:000003">
    <property type="entry name" value="S-(hydroxymethyl)glutathione dehydrogenase"/>
    <property type="match status" value="1"/>
</dbReference>
<dbReference type="FunFam" id="3.90.180.10:FF:000001">
    <property type="entry name" value="S-(hydroxymethyl)glutathione dehydrogenase"/>
    <property type="match status" value="1"/>
</dbReference>
<dbReference type="Gene3D" id="3.90.180.10">
    <property type="entry name" value="Medium-chain alcohol dehydrogenases, catalytic domain"/>
    <property type="match status" value="1"/>
</dbReference>
<dbReference type="Gene3D" id="3.40.50.720">
    <property type="entry name" value="NAD(P)-binding Rossmann-like Domain"/>
    <property type="match status" value="1"/>
</dbReference>
<dbReference type="InterPro" id="IPR013149">
    <property type="entry name" value="ADH-like_C"/>
</dbReference>
<dbReference type="InterPro" id="IPR013154">
    <property type="entry name" value="ADH-like_N"/>
</dbReference>
<dbReference type="InterPro" id="IPR014183">
    <property type="entry name" value="ADH_3"/>
</dbReference>
<dbReference type="InterPro" id="IPR002328">
    <property type="entry name" value="ADH_Zn_CS"/>
</dbReference>
<dbReference type="InterPro" id="IPR011032">
    <property type="entry name" value="GroES-like_sf"/>
</dbReference>
<dbReference type="InterPro" id="IPR036291">
    <property type="entry name" value="NAD(P)-bd_dom_sf"/>
</dbReference>
<dbReference type="NCBIfam" id="TIGR02818">
    <property type="entry name" value="adh_III_F_hyde"/>
    <property type="match status" value="1"/>
</dbReference>
<dbReference type="PANTHER" id="PTHR43880">
    <property type="entry name" value="ALCOHOL DEHYDROGENASE"/>
    <property type="match status" value="1"/>
</dbReference>
<dbReference type="PANTHER" id="PTHR43880:SF4">
    <property type="entry name" value="ALCOHOL DEHYDROGENASE CLASS-3"/>
    <property type="match status" value="1"/>
</dbReference>
<dbReference type="Pfam" id="PF08240">
    <property type="entry name" value="ADH_N"/>
    <property type="match status" value="1"/>
</dbReference>
<dbReference type="Pfam" id="PF00107">
    <property type="entry name" value="ADH_zinc_N"/>
    <property type="match status" value="1"/>
</dbReference>
<dbReference type="SUPFAM" id="SSF50129">
    <property type="entry name" value="GroES-like"/>
    <property type="match status" value="2"/>
</dbReference>
<dbReference type="SUPFAM" id="SSF51735">
    <property type="entry name" value="NAD(P)-binding Rossmann-fold domains"/>
    <property type="match status" value="1"/>
</dbReference>
<dbReference type="PROSITE" id="PS00059">
    <property type="entry name" value="ADH_ZINC"/>
    <property type="match status" value="1"/>
</dbReference>
<protein>
    <recommendedName>
        <fullName evidence="1">Alcohol dehydrogenase class-3</fullName>
        <ecNumber evidence="1">1.1.1.1</ecNumber>
    </recommendedName>
    <alternativeName>
        <fullName>Alcohol dehydrogenase 5</fullName>
    </alternativeName>
    <alternativeName>
        <fullName>Alcohol dehydrogenase class-III</fullName>
    </alternativeName>
    <alternativeName>
        <fullName>Glutathione-dependent formaldehyde dehydrogenase</fullName>
        <shortName>FALDH</shortName>
        <shortName>FDH</shortName>
        <shortName>GSH-FDH</shortName>
        <ecNumber>1.1.1.-</ecNumber>
    </alternativeName>
    <alternativeName>
        <fullName>S-(hydroxymethyl)glutathione dehydrogenase</fullName>
        <ecNumber evidence="1">1.1.1.284</ecNumber>
    </alternativeName>
</protein>
<proteinExistence type="evidence at protein level"/>
<gene>
    <name evidence="1" type="primary">ADH5</name>
</gene>
<reference key="1">
    <citation type="journal article" date="1989" name="Biochemistry">
        <title>Characteristics of mammalian class III alcohol dehydrogenases, an enzyme less variable than the traditional liver enzyme of class I.</title>
        <authorList>
            <person name="Kaiser R."/>
            <person name="Holmquist B."/>
            <person name="Vallee B.L."/>
            <person name="Joernvall H."/>
        </authorList>
    </citation>
    <scope>PROTEIN SEQUENCE OF 2-374</scope>
    <scope>ACETYLATION AT SER-2</scope>
</reference>
<reference key="2">
    <citation type="journal article" date="1987" name="FEBS Lett.">
        <title>Acetylated N-terminal structures of class III alcohol dehydrogenases. Differences among the three enzyme classes.</title>
        <authorList>
            <person name="Fairwell T."/>
            <person name="Julia P."/>
            <person name="Kaiser R."/>
            <person name="Holmquist B."/>
            <person name="Pares X."/>
            <person name="Vallee B.L."/>
            <person name="Joernvall H."/>
        </authorList>
    </citation>
    <scope>PROTEIN SEQUENCE OF 2-7</scope>
    <scope>ACETYLATION AT SER-2</scope>
</reference>
<evidence type="ECO:0000250" key="1">
    <source>
        <dbReference type="UniProtKB" id="P11766"/>
    </source>
</evidence>
<evidence type="ECO:0000250" key="2">
    <source>
        <dbReference type="UniProtKB" id="P28474"/>
    </source>
</evidence>
<evidence type="ECO:0000269" key="3">
    <source>
    </source>
</evidence>
<evidence type="ECO:0000269" key="4">
    <source>
    </source>
</evidence>
<evidence type="ECO:0000305" key="5"/>
<keyword id="KW-0007">Acetylation</keyword>
<keyword id="KW-0963">Cytoplasm</keyword>
<keyword id="KW-0903">Direct protein sequencing</keyword>
<keyword id="KW-0443">Lipid metabolism</keyword>
<keyword id="KW-0479">Metal-binding</keyword>
<keyword id="KW-0520">NAD</keyword>
<keyword id="KW-0560">Oxidoreductase</keyword>
<keyword id="KW-0597">Phosphoprotein</keyword>
<keyword id="KW-1185">Reference proteome</keyword>
<keyword id="KW-0862">Zinc</keyword>
<name>ADHX_HORSE</name>
<sequence>MSAEVIKCKAAVAWEAGKPVSIEEVEVAPPKAHEVRIKIIATAVCHTDAYTLSGADPEGSFPVILGHEGAGIVESVGEGVTKLKAGDTVIPLYIPQCGECKFCLNPQTNLCQKIRTTQGKGLMPDGTSRFTCKGKTILHYMGTSTFSEYTVVADISVAKIDPLAPLDKVCLLGCGVSTGYGAAVNTAKVEPGSTCAIFGLGGVGLAVIMGCKVAGASRIIGVDINKDKFAKAKEFGASECINPQDFSKPIQEVLIEMTDGGVDYSFECIGNVKVMRAALEACHKGWGVSVVVGVAASGEEIATRPFQLVTGRTWKGTAFGGWKSVESIPKLVSEYMSKKIKVDEFVTHSLSFDQINEAFELMHAGKSIRTVVKL</sequence>
<organism>
    <name type="scientific">Equus caballus</name>
    <name type="common">Horse</name>
    <dbReference type="NCBI Taxonomy" id="9796"/>
    <lineage>
        <taxon>Eukaryota</taxon>
        <taxon>Metazoa</taxon>
        <taxon>Chordata</taxon>
        <taxon>Craniata</taxon>
        <taxon>Vertebrata</taxon>
        <taxon>Euteleostomi</taxon>
        <taxon>Mammalia</taxon>
        <taxon>Eutheria</taxon>
        <taxon>Laurasiatheria</taxon>
        <taxon>Perissodactyla</taxon>
        <taxon>Equidae</taxon>
        <taxon>Equus</taxon>
    </lineage>
</organism>
<comment type="function">
    <text evidence="1 2">Catalyzes the oxidation of long-chain primary alcohols and the oxidation of S-(hydroxymethyl) glutathione. Also oxidizes long chain omega-hydroxy fatty acids, such as 20-HETE, producing both the intermediate aldehyde, 20-oxoarachidonate and the end product, a dicarboxylic acid, (5Z,8Z,11Z,14Z)-eicosatetraenedioate. Class-III ADH is remarkably ineffective in oxidizing ethanol. Required for clearance of cellular formaldehyde, a cytotoxic and carcinogenic metabolite that induces DNA damage (By similarity). Also acts as a S-nitroso-glutathione reductase by catalyzing the NADH-dependent reduction of S-nitrosoglutathione, thereby regulating protein S-nitrosylation (By similarity).</text>
</comment>
<comment type="catalytic activity">
    <reaction evidence="1">
        <text>a primary alcohol + NAD(+) = an aldehyde + NADH + H(+)</text>
        <dbReference type="Rhea" id="RHEA:10736"/>
        <dbReference type="ChEBI" id="CHEBI:15378"/>
        <dbReference type="ChEBI" id="CHEBI:15734"/>
        <dbReference type="ChEBI" id="CHEBI:17478"/>
        <dbReference type="ChEBI" id="CHEBI:57540"/>
        <dbReference type="ChEBI" id="CHEBI:57945"/>
        <dbReference type="EC" id="1.1.1.1"/>
    </reaction>
</comment>
<comment type="catalytic activity">
    <reaction evidence="1">
        <text>a secondary alcohol + NAD(+) = a ketone + NADH + H(+)</text>
        <dbReference type="Rhea" id="RHEA:10740"/>
        <dbReference type="ChEBI" id="CHEBI:15378"/>
        <dbReference type="ChEBI" id="CHEBI:17087"/>
        <dbReference type="ChEBI" id="CHEBI:35681"/>
        <dbReference type="ChEBI" id="CHEBI:57540"/>
        <dbReference type="ChEBI" id="CHEBI:57945"/>
        <dbReference type="EC" id="1.1.1.1"/>
    </reaction>
</comment>
<comment type="catalytic activity">
    <reaction evidence="1">
        <text>S-(hydroxymethyl)glutathione + NADP(+) = S-formylglutathione + NADPH + H(+)</text>
        <dbReference type="Rhea" id="RHEA:19981"/>
        <dbReference type="ChEBI" id="CHEBI:15378"/>
        <dbReference type="ChEBI" id="CHEBI:57688"/>
        <dbReference type="ChEBI" id="CHEBI:57783"/>
        <dbReference type="ChEBI" id="CHEBI:58349"/>
        <dbReference type="ChEBI" id="CHEBI:58758"/>
        <dbReference type="EC" id="1.1.1.284"/>
    </reaction>
</comment>
<comment type="catalytic activity">
    <reaction evidence="1">
        <text>S-(hydroxymethyl)glutathione + NAD(+) = S-formylglutathione + NADH + H(+)</text>
        <dbReference type="Rhea" id="RHEA:19985"/>
        <dbReference type="ChEBI" id="CHEBI:15378"/>
        <dbReference type="ChEBI" id="CHEBI:57540"/>
        <dbReference type="ChEBI" id="CHEBI:57688"/>
        <dbReference type="ChEBI" id="CHEBI:57945"/>
        <dbReference type="ChEBI" id="CHEBI:58758"/>
        <dbReference type="EC" id="1.1.1.284"/>
    </reaction>
</comment>
<comment type="catalytic activity">
    <reaction evidence="1">
        <text>20-oxo-(5Z,8Z,11Z,14Z)-eicosatetraenoate + NAD(+) + H2O = (5Z,8Z,11Z,14Z)-eicosatetraenedioate + NADH + 2 H(+)</text>
        <dbReference type="Rhea" id="RHEA:39803"/>
        <dbReference type="ChEBI" id="CHEBI:15377"/>
        <dbReference type="ChEBI" id="CHEBI:15378"/>
        <dbReference type="ChEBI" id="CHEBI:57540"/>
        <dbReference type="ChEBI" id="CHEBI:57945"/>
        <dbReference type="ChEBI" id="CHEBI:76645"/>
        <dbReference type="ChEBI" id="CHEBI:76647"/>
    </reaction>
    <physiologicalReaction direction="left-to-right" evidence="1">
        <dbReference type="Rhea" id="RHEA:39804"/>
    </physiologicalReaction>
</comment>
<comment type="catalytic activity">
    <reaction evidence="1">
        <text>20-hydroxy-(5Z,8Z,11Z,14Z)-eicosatetraenoate + NAD(+) = 20-oxo-(5Z,8Z,11Z,14Z)-eicosatetraenoate + NADH + H(+)</text>
        <dbReference type="Rhea" id="RHEA:39799"/>
        <dbReference type="ChEBI" id="CHEBI:15378"/>
        <dbReference type="ChEBI" id="CHEBI:57540"/>
        <dbReference type="ChEBI" id="CHEBI:57945"/>
        <dbReference type="ChEBI" id="CHEBI:76624"/>
        <dbReference type="ChEBI" id="CHEBI:76645"/>
    </reaction>
    <physiologicalReaction direction="left-to-right" evidence="1">
        <dbReference type="Rhea" id="RHEA:39800"/>
    </physiologicalReaction>
</comment>
<comment type="catalytic activity">
    <reaction evidence="2">
        <text>S-nitrosoglutathione + NADH + H(+) = S-(hydroxysulfenamide)glutathione + NAD(+)</text>
        <dbReference type="Rhea" id="RHEA:78371"/>
        <dbReference type="ChEBI" id="CHEBI:15378"/>
        <dbReference type="ChEBI" id="CHEBI:57540"/>
        <dbReference type="ChEBI" id="CHEBI:57945"/>
        <dbReference type="ChEBI" id="CHEBI:145544"/>
        <dbReference type="ChEBI" id="CHEBI:229723"/>
    </reaction>
    <physiologicalReaction direction="left-to-right" evidence="2">
        <dbReference type="Rhea" id="RHEA:78372"/>
    </physiologicalReaction>
</comment>
<comment type="cofactor">
    <cofactor evidence="1">
        <name>Zn(2+)</name>
        <dbReference type="ChEBI" id="CHEBI:29105"/>
    </cofactor>
    <text evidence="1">Binds 2 Zn(2+) ions per subunit.</text>
</comment>
<comment type="subunit">
    <text evidence="1">Homodimer.</text>
</comment>
<comment type="subcellular location">
    <subcellularLocation>
        <location evidence="5">Cytoplasm</location>
    </subcellularLocation>
</comment>
<comment type="similarity">
    <text evidence="5">Belongs to the zinc-containing alcohol dehydrogenase family. Class-III subfamily.</text>
</comment>
<accession>P19854</accession>
<feature type="initiator methionine" description="Removed" evidence="3 4">
    <location>
        <position position="1"/>
    </location>
</feature>
<feature type="chain" id="PRO_0000160758" description="Alcohol dehydrogenase class-3">
    <location>
        <begin position="2"/>
        <end position="374"/>
    </location>
</feature>
<feature type="binding site" evidence="1">
    <location>
        <position position="45"/>
    </location>
    <ligand>
        <name>Zn(2+)</name>
        <dbReference type="ChEBI" id="CHEBI:29105"/>
        <label>1</label>
        <note>catalytic</note>
    </ligand>
</feature>
<feature type="binding site" evidence="1">
    <location>
        <position position="67"/>
    </location>
    <ligand>
        <name>Zn(2+)</name>
        <dbReference type="ChEBI" id="CHEBI:29105"/>
        <label>1</label>
        <note>catalytic</note>
    </ligand>
</feature>
<feature type="binding site" evidence="1">
    <location>
        <position position="97"/>
    </location>
    <ligand>
        <name>Zn(2+)</name>
        <dbReference type="ChEBI" id="CHEBI:29105"/>
        <label>2</label>
    </ligand>
</feature>
<feature type="binding site" evidence="1">
    <location>
        <position position="100"/>
    </location>
    <ligand>
        <name>Zn(2+)</name>
        <dbReference type="ChEBI" id="CHEBI:29105"/>
        <label>2</label>
    </ligand>
</feature>
<feature type="binding site" evidence="1">
    <location>
        <position position="103"/>
    </location>
    <ligand>
        <name>Zn(2+)</name>
        <dbReference type="ChEBI" id="CHEBI:29105"/>
        <label>2</label>
    </ligand>
</feature>
<feature type="binding site" evidence="1">
    <location>
        <position position="111"/>
    </location>
    <ligand>
        <name>Zn(2+)</name>
        <dbReference type="ChEBI" id="CHEBI:29105"/>
        <label>2</label>
    </ligand>
</feature>
<feature type="binding site" evidence="1">
    <location>
        <position position="174"/>
    </location>
    <ligand>
        <name>Zn(2+)</name>
        <dbReference type="ChEBI" id="CHEBI:29105"/>
        <label>1</label>
        <note>catalytic</note>
    </ligand>
</feature>
<feature type="site" description="Important for FDH activity and activation by fatty acids" evidence="1">
    <location>
        <position position="115"/>
    </location>
</feature>
<feature type="modified residue" description="N-acetylserine" evidence="3 4">
    <location>
        <position position="2"/>
    </location>
</feature>
<feature type="modified residue" description="N6-succinyllysine" evidence="2">
    <location>
        <position position="233"/>
    </location>
</feature>
<feature type="modified residue" description="Phosphoserine" evidence="1">
    <location>
        <position position="247"/>
    </location>
</feature>
<feature type="modified residue" description="N6-succinyllysine" evidence="2">
    <location>
        <position position="315"/>
    </location>
</feature>
<feature type="modified residue" description="Phosphoserine" evidence="1">
    <location>
        <position position="324"/>
    </location>
</feature>
<feature type="modified residue" description="Phosphoserine" evidence="1">
    <location>
        <position position="351"/>
    </location>
</feature>